<evidence type="ECO:0000255" key="1">
    <source>
        <dbReference type="HAMAP-Rule" id="MF_01824"/>
    </source>
</evidence>
<keyword id="KW-0456">Lyase</keyword>
<keyword id="KW-0663">Pyridoxal phosphate</keyword>
<keyword id="KW-0704">Schiff base</keyword>
<accession>A7Z0D3</accession>
<proteinExistence type="inferred from homology"/>
<organism>
    <name type="scientific">Bacillus velezensis (strain DSM 23117 / BGSC 10A6 / LMG 26770 / FZB42)</name>
    <name type="common">Bacillus amyloliquefaciens subsp. plantarum</name>
    <dbReference type="NCBI Taxonomy" id="326423"/>
    <lineage>
        <taxon>Bacteria</taxon>
        <taxon>Bacillati</taxon>
        <taxon>Bacillota</taxon>
        <taxon>Bacilli</taxon>
        <taxon>Bacillales</taxon>
        <taxon>Bacillaceae</taxon>
        <taxon>Bacillus</taxon>
        <taxon>Bacillus amyloliquefaciens group</taxon>
    </lineage>
</organism>
<sequence length="294" mass="31613">MAQTGTDRVKRGMAEMQKGGVIMDVVNAEQAKIAEEAGAVAVMALERVPADIRAAGGVARMADPTIVEEVMNAVSIPVMAKARIGHIVEARVLEAMGVDYIDESEVLTPADEEFHLNKNEYTVPFVCGCRDLGEATRRIAEGASMLRTKGEPGTGNIVEAVRHMRKVNAQVRKVVAMSDDELMTEAKNLGAPYELLLQIKRDGKLPVVNFAAGGVATPADAALMMQLGADGVFVGSGIFKSDNPAKFAKAIVEATTHYTDYKLIAELSKELGTAMKGIEISNLLPEQRMQERGW</sequence>
<name>PDXS_BACVZ</name>
<reference key="1">
    <citation type="journal article" date="2007" name="Nat. Biotechnol.">
        <title>Comparative analysis of the complete genome sequence of the plant growth-promoting bacterium Bacillus amyloliquefaciens FZB42.</title>
        <authorList>
            <person name="Chen X.H."/>
            <person name="Koumoutsi A."/>
            <person name="Scholz R."/>
            <person name="Eisenreich A."/>
            <person name="Schneider K."/>
            <person name="Heinemeyer I."/>
            <person name="Morgenstern B."/>
            <person name="Voss B."/>
            <person name="Hess W.R."/>
            <person name="Reva O."/>
            <person name="Junge H."/>
            <person name="Voigt B."/>
            <person name="Jungblut P.R."/>
            <person name="Vater J."/>
            <person name="Suessmuth R."/>
            <person name="Liesegang H."/>
            <person name="Strittmatter A."/>
            <person name="Gottschalk G."/>
            <person name="Borriss R."/>
        </authorList>
    </citation>
    <scope>NUCLEOTIDE SEQUENCE [LARGE SCALE GENOMIC DNA]</scope>
    <source>
        <strain>DSM 23117 / BGSC 10A6 / LMG 26770 / FZB42</strain>
    </source>
</reference>
<gene>
    <name evidence="1" type="primary">pdxS</name>
    <name type="ordered locus">RBAM_000140</name>
</gene>
<comment type="function">
    <text evidence="1">Catalyzes the formation of pyridoxal 5'-phosphate from ribose 5-phosphate (RBP), glyceraldehyde 3-phosphate (G3P) and ammonia. The ammonia is provided by the PdxT subunit. Can also use ribulose 5-phosphate and dihydroxyacetone phosphate as substrates, resulting from enzyme-catalyzed isomerization of RBP and G3P, respectively.</text>
</comment>
<comment type="catalytic activity">
    <reaction evidence="1">
        <text>aldehydo-D-ribose 5-phosphate + D-glyceraldehyde 3-phosphate + L-glutamine = pyridoxal 5'-phosphate + L-glutamate + phosphate + 3 H2O + H(+)</text>
        <dbReference type="Rhea" id="RHEA:31507"/>
        <dbReference type="ChEBI" id="CHEBI:15377"/>
        <dbReference type="ChEBI" id="CHEBI:15378"/>
        <dbReference type="ChEBI" id="CHEBI:29985"/>
        <dbReference type="ChEBI" id="CHEBI:43474"/>
        <dbReference type="ChEBI" id="CHEBI:58273"/>
        <dbReference type="ChEBI" id="CHEBI:58359"/>
        <dbReference type="ChEBI" id="CHEBI:59776"/>
        <dbReference type="ChEBI" id="CHEBI:597326"/>
        <dbReference type="EC" id="4.3.3.6"/>
    </reaction>
</comment>
<comment type="pathway">
    <text evidence="1">Cofactor biosynthesis; pyridoxal 5'-phosphate biosynthesis.</text>
</comment>
<comment type="subunit">
    <text evidence="1">In the presence of PdxT, forms a dodecamer of heterodimers.</text>
</comment>
<comment type="similarity">
    <text evidence="1">Belongs to the PdxS/SNZ family.</text>
</comment>
<dbReference type="EC" id="4.3.3.6" evidence="1"/>
<dbReference type="EMBL" id="CP000560">
    <property type="protein sequence ID" value="ABS72459.1"/>
    <property type="molecule type" value="Genomic_DNA"/>
</dbReference>
<dbReference type="RefSeq" id="WP_003150714.1">
    <property type="nucleotide sequence ID" value="NC_009725.2"/>
</dbReference>
<dbReference type="SMR" id="A7Z0D3"/>
<dbReference type="GeneID" id="93079152"/>
<dbReference type="KEGG" id="bay:RBAM_000140"/>
<dbReference type="HOGENOM" id="CLU_055352_1_0_9"/>
<dbReference type="UniPathway" id="UPA00245"/>
<dbReference type="Proteomes" id="UP000001120">
    <property type="component" value="Chromosome"/>
</dbReference>
<dbReference type="GO" id="GO:0036381">
    <property type="term" value="F:pyridoxal 5'-phosphate synthase (glutamine hydrolysing) activity"/>
    <property type="evidence" value="ECO:0007669"/>
    <property type="project" value="UniProtKB-UniRule"/>
</dbReference>
<dbReference type="GO" id="GO:0006520">
    <property type="term" value="P:amino acid metabolic process"/>
    <property type="evidence" value="ECO:0007669"/>
    <property type="project" value="TreeGrafter"/>
</dbReference>
<dbReference type="GO" id="GO:0042823">
    <property type="term" value="P:pyridoxal phosphate biosynthetic process"/>
    <property type="evidence" value="ECO:0007669"/>
    <property type="project" value="UniProtKB-UniRule"/>
</dbReference>
<dbReference type="GO" id="GO:0008615">
    <property type="term" value="P:pyridoxine biosynthetic process"/>
    <property type="evidence" value="ECO:0007669"/>
    <property type="project" value="TreeGrafter"/>
</dbReference>
<dbReference type="CDD" id="cd04727">
    <property type="entry name" value="pdxS"/>
    <property type="match status" value="1"/>
</dbReference>
<dbReference type="FunFam" id="3.20.20.70:FF:000001">
    <property type="entry name" value="Pyridoxine biosynthesis protein PDX1"/>
    <property type="match status" value="1"/>
</dbReference>
<dbReference type="Gene3D" id="3.20.20.70">
    <property type="entry name" value="Aldolase class I"/>
    <property type="match status" value="1"/>
</dbReference>
<dbReference type="HAMAP" id="MF_01824">
    <property type="entry name" value="PdxS"/>
    <property type="match status" value="1"/>
</dbReference>
<dbReference type="InterPro" id="IPR013785">
    <property type="entry name" value="Aldolase_TIM"/>
</dbReference>
<dbReference type="InterPro" id="IPR001852">
    <property type="entry name" value="PdxS/SNZ"/>
</dbReference>
<dbReference type="InterPro" id="IPR033755">
    <property type="entry name" value="PdxS/SNZ_N"/>
</dbReference>
<dbReference type="InterPro" id="IPR011060">
    <property type="entry name" value="RibuloseP-bd_barrel"/>
</dbReference>
<dbReference type="NCBIfam" id="NF003215">
    <property type="entry name" value="PRK04180.1"/>
    <property type="match status" value="1"/>
</dbReference>
<dbReference type="NCBIfam" id="TIGR00343">
    <property type="entry name" value="pyridoxal 5'-phosphate synthase lyase subunit PdxS"/>
    <property type="match status" value="1"/>
</dbReference>
<dbReference type="PANTHER" id="PTHR31829">
    <property type="entry name" value="PYRIDOXAL 5'-PHOSPHATE SYNTHASE SUBUNIT SNZ1-RELATED"/>
    <property type="match status" value="1"/>
</dbReference>
<dbReference type="PANTHER" id="PTHR31829:SF0">
    <property type="entry name" value="PYRIDOXAL 5'-PHOSPHATE SYNTHASE SUBUNIT SNZ1-RELATED"/>
    <property type="match status" value="1"/>
</dbReference>
<dbReference type="Pfam" id="PF01680">
    <property type="entry name" value="SOR_SNZ"/>
    <property type="match status" value="1"/>
</dbReference>
<dbReference type="PIRSF" id="PIRSF029271">
    <property type="entry name" value="Pdx1"/>
    <property type="match status" value="1"/>
</dbReference>
<dbReference type="SUPFAM" id="SSF51366">
    <property type="entry name" value="Ribulose-phoshate binding barrel"/>
    <property type="match status" value="1"/>
</dbReference>
<dbReference type="PROSITE" id="PS01235">
    <property type="entry name" value="PDXS_SNZ_1"/>
    <property type="match status" value="1"/>
</dbReference>
<dbReference type="PROSITE" id="PS51129">
    <property type="entry name" value="PDXS_SNZ_2"/>
    <property type="match status" value="1"/>
</dbReference>
<feature type="chain" id="PRO_1000070363" description="Pyridoxal 5'-phosphate synthase subunit PdxS">
    <location>
        <begin position="1"/>
        <end position="294"/>
    </location>
</feature>
<feature type="active site" description="Schiff-base intermediate with D-ribose 5-phosphate" evidence="1">
    <location>
        <position position="81"/>
    </location>
</feature>
<feature type="binding site" evidence="1">
    <location>
        <position position="24"/>
    </location>
    <ligand>
        <name>D-ribose 5-phosphate</name>
        <dbReference type="ChEBI" id="CHEBI:78346"/>
    </ligand>
</feature>
<feature type="binding site" evidence="1">
    <location>
        <position position="153"/>
    </location>
    <ligand>
        <name>D-ribose 5-phosphate</name>
        <dbReference type="ChEBI" id="CHEBI:78346"/>
    </ligand>
</feature>
<feature type="binding site" evidence="1">
    <location>
        <position position="165"/>
    </location>
    <ligand>
        <name>D-glyceraldehyde 3-phosphate</name>
        <dbReference type="ChEBI" id="CHEBI:59776"/>
    </ligand>
</feature>
<feature type="binding site" evidence="1">
    <location>
        <position position="214"/>
    </location>
    <ligand>
        <name>D-ribose 5-phosphate</name>
        <dbReference type="ChEBI" id="CHEBI:78346"/>
    </ligand>
</feature>
<feature type="binding site" evidence="1">
    <location>
        <begin position="235"/>
        <end position="236"/>
    </location>
    <ligand>
        <name>D-ribose 5-phosphate</name>
        <dbReference type="ChEBI" id="CHEBI:78346"/>
    </ligand>
</feature>
<protein>
    <recommendedName>
        <fullName evidence="1">Pyridoxal 5'-phosphate synthase subunit PdxS</fullName>
        <shortName evidence="1">PLP synthase subunit PdxS</shortName>
        <ecNumber evidence="1">4.3.3.6</ecNumber>
    </recommendedName>
    <alternativeName>
        <fullName evidence="1">Pdx1</fullName>
    </alternativeName>
</protein>